<keyword id="KW-0056">Arginine metabolism</keyword>
<keyword id="KW-0963">Cytoplasm</keyword>
<keyword id="KW-0808">Transferase</keyword>
<protein>
    <recommendedName>
        <fullName evidence="2">Ornithine carbamoyltransferase</fullName>
        <shortName evidence="2">OTCase</shortName>
        <ecNumber evidence="2">2.1.3.3</ecNumber>
    </recommendedName>
</protein>
<comment type="function">
    <text evidence="1">Reversibly catalyzes the transfer of the carbamoyl group from carbamoyl phosphate (CP) to the N(epsilon) atom of ornithine (ORN) to produce L-citrulline.</text>
</comment>
<comment type="catalytic activity">
    <reaction evidence="2">
        <text>carbamoyl phosphate + L-ornithine = L-citrulline + phosphate + H(+)</text>
        <dbReference type="Rhea" id="RHEA:19513"/>
        <dbReference type="ChEBI" id="CHEBI:15378"/>
        <dbReference type="ChEBI" id="CHEBI:43474"/>
        <dbReference type="ChEBI" id="CHEBI:46911"/>
        <dbReference type="ChEBI" id="CHEBI:57743"/>
        <dbReference type="ChEBI" id="CHEBI:58228"/>
        <dbReference type="EC" id="2.1.3.3"/>
    </reaction>
</comment>
<comment type="pathway">
    <text evidence="2">Amino-acid degradation; L-arginine degradation via ADI pathway; carbamoyl phosphate from L-arginine: step 2/2.</text>
</comment>
<comment type="subcellular location">
    <subcellularLocation>
        <location evidence="2">Cytoplasm</location>
    </subcellularLocation>
</comment>
<comment type="similarity">
    <text evidence="2">Belongs to the aspartate/ornithine carbamoyltransferase superfamily. OTCase family.</text>
</comment>
<reference key="1">
    <citation type="journal article" date="2009" name="Science">
        <title>The dynamics and time scale of ongoing genomic erosion in symbiotic bacteria.</title>
        <authorList>
            <person name="Moran N.A."/>
            <person name="McLaughlin H.J."/>
            <person name="Sorek R."/>
        </authorList>
    </citation>
    <scope>NUCLEOTIDE SEQUENCE [LARGE SCALE GENOMIC DNA]</scope>
    <source>
        <strain>5A</strain>
    </source>
</reference>
<sequence length="338" mass="38847">MNNLYQRDCLRLLDFTSLELQNIITLAQKLKQYKKNNKEIQLLKKKNIALIFEKESTRTRCSFEVAAFDQGAHVTYLGPGSTHLGTKESIEDTAKILGRLYDGIQYRGHHHSTIEILAKNSKVPVWNGLTEKFHPTQLLADLLTIKEIFPERKFYEIKCAYVGDAHNNMGNSLLEAASLVGLDLRLVAPKECWPEKNIFKFCKEQIKNKKGNIICTENINEGVKNVDFIYTDVWVSMGESKEVWKKRIELLSSYQVNSLMLKITNNPQVKVLHCLPALHDQKTCTVKSILKKYGFKNGMEITDEVFQKNQKIIFEQAENRLHTIKAILVSSLLKTIKF</sequence>
<proteinExistence type="inferred from homology"/>
<name>OTC_BUCA5</name>
<gene>
    <name evidence="2" type="primary">arcB</name>
    <name type="ordered locus">BUAP5A_361</name>
</gene>
<feature type="chain" id="PRO_1000163964" description="Ornithine carbamoyltransferase">
    <location>
        <begin position="1"/>
        <end position="338"/>
    </location>
</feature>
<feature type="binding site" evidence="2">
    <location>
        <begin position="56"/>
        <end position="59"/>
    </location>
    <ligand>
        <name>carbamoyl phosphate</name>
        <dbReference type="ChEBI" id="CHEBI:58228"/>
    </ligand>
</feature>
<feature type="binding site" evidence="2">
    <location>
        <position position="107"/>
    </location>
    <ligand>
        <name>carbamoyl phosphate</name>
        <dbReference type="ChEBI" id="CHEBI:58228"/>
    </ligand>
</feature>
<feature type="binding site" evidence="2">
    <location>
        <begin position="134"/>
        <end position="137"/>
    </location>
    <ligand>
        <name>carbamoyl phosphate</name>
        <dbReference type="ChEBI" id="CHEBI:58228"/>
    </ligand>
</feature>
<feature type="binding site" evidence="2">
    <location>
        <position position="168"/>
    </location>
    <ligand>
        <name>L-ornithine</name>
        <dbReference type="ChEBI" id="CHEBI:46911"/>
    </ligand>
</feature>
<feature type="binding site" evidence="2">
    <location>
        <position position="232"/>
    </location>
    <ligand>
        <name>L-ornithine</name>
        <dbReference type="ChEBI" id="CHEBI:46911"/>
    </ligand>
</feature>
<feature type="binding site" evidence="2">
    <location>
        <begin position="236"/>
        <end position="237"/>
    </location>
    <ligand>
        <name>L-ornithine</name>
        <dbReference type="ChEBI" id="CHEBI:46911"/>
    </ligand>
</feature>
<feature type="binding site" evidence="2">
    <location>
        <begin position="274"/>
        <end position="275"/>
    </location>
    <ligand>
        <name>carbamoyl phosphate</name>
        <dbReference type="ChEBI" id="CHEBI:58228"/>
    </ligand>
</feature>
<feature type="binding site" evidence="2">
    <location>
        <position position="320"/>
    </location>
    <ligand>
        <name>carbamoyl phosphate</name>
        <dbReference type="ChEBI" id="CHEBI:58228"/>
    </ligand>
</feature>
<evidence type="ECO:0000250" key="1"/>
<evidence type="ECO:0000255" key="2">
    <source>
        <dbReference type="HAMAP-Rule" id="MF_01109"/>
    </source>
</evidence>
<organism>
    <name type="scientific">Buchnera aphidicola subsp. Acyrthosiphon pisum (strain 5A)</name>
    <dbReference type="NCBI Taxonomy" id="563178"/>
    <lineage>
        <taxon>Bacteria</taxon>
        <taxon>Pseudomonadati</taxon>
        <taxon>Pseudomonadota</taxon>
        <taxon>Gammaproteobacteria</taxon>
        <taxon>Enterobacterales</taxon>
        <taxon>Erwiniaceae</taxon>
        <taxon>Buchnera</taxon>
    </lineage>
</organism>
<dbReference type="EC" id="2.1.3.3" evidence="2"/>
<dbReference type="EMBL" id="CP001161">
    <property type="protein sequence ID" value="ACL30724.1"/>
    <property type="molecule type" value="Genomic_DNA"/>
</dbReference>
<dbReference type="RefSeq" id="WP_009874326.1">
    <property type="nucleotide sequence ID" value="NC_011833.1"/>
</dbReference>
<dbReference type="SMR" id="B8D9F3"/>
<dbReference type="KEGG" id="bap:BUAP5A_361"/>
<dbReference type="HOGENOM" id="CLU_043846_3_1_6"/>
<dbReference type="OrthoDB" id="9802587at2"/>
<dbReference type="UniPathway" id="UPA00254">
    <property type="reaction ID" value="UER00365"/>
</dbReference>
<dbReference type="Proteomes" id="UP000006904">
    <property type="component" value="Chromosome"/>
</dbReference>
<dbReference type="GO" id="GO:0005737">
    <property type="term" value="C:cytoplasm"/>
    <property type="evidence" value="ECO:0007669"/>
    <property type="project" value="UniProtKB-SubCell"/>
</dbReference>
<dbReference type="GO" id="GO:0016597">
    <property type="term" value="F:amino acid binding"/>
    <property type="evidence" value="ECO:0007669"/>
    <property type="project" value="InterPro"/>
</dbReference>
<dbReference type="GO" id="GO:0004585">
    <property type="term" value="F:ornithine carbamoyltransferase activity"/>
    <property type="evidence" value="ECO:0007669"/>
    <property type="project" value="UniProtKB-UniRule"/>
</dbReference>
<dbReference type="GO" id="GO:0042450">
    <property type="term" value="P:arginine biosynthetic process via ornithine"/>
    <property type="evidence" value="ECO:0007669"/>
    <property type="project" value="TreeGrafter"/>
</dbReference>
<dbReference type="GO" id="GO:0019547">
    <property type="term" value="P:arginine catabolic process to ornithine"/>
    <property type="evidence" value="ECO:0007669"/>
    <property type="project" value="UniProtKB-UniRule"/>
</dbReference>
<dbReference type="GO" id="GO:0019240">
    <property type="term" value="P:citrulline biosynthetic process"/>
    <property type="evidence" value="ECO:0007669"/>
    <property type="project" value="TreeGrafter"/>
</dbReference>
<dbReference type="FunFam" id="3.40.50.1370:FF:000008">
    <property type="entry name" value="Ornithine carbamoyltransferase"/>
    <property type="match status" value="1"/>
</dbReference>
<dbReference type="Gene3D" id="3.40.50.1370">
    <property type="entry name" value="Aspartate/ornithine carbamoyltransferase"/>
    <property type="match status" value="2"/>
</dbReference>
<dbReference type="HAMAP" id="MF_01109">
    <property type="entry name" value="OTCase"/>
    <property type="match status" value="1"/>
</dbReference>
<dbReference type="InterPro" id="IPR006132">
    <property type="entry name" value="Asp/Orn_carbamoyltranf_P-bd"/>
</dbReference>
<dbReference type="InterPro" id="IPR006130">
    <property type="entry name" value="Asp/Orn_carbamoylTrfase"/>
</dbReference>
<dbReference type="InterPro" id="IPR036901">
    <property type="entry name" value="Asp/Orn_carbamoylTrfase_sf"/>
</dbReference>
<dbReference type="InterPro" id="IPR006131">
    <property type="entry name" value="Asp_carbamoyltransf_Asp/Orn-bd"/>
</dbReference>
<dbReference type="InterPro" id="IPR002292">
    <property type="entry name" value="Orn/put_carbamltrans"/>
</dbReference>
<dbReference type="InterPro" id="IPR024904">
    <property type="entry name" value="OTCase_ArgI"/>
</dbReference>
<dbReference type="NCBIfam" id="TIGR00658">
    <property type="entry name" value="orni_carb_tr"/>
    <property type="match status" value="1"/>
</dbReference>
<dbReference type="PANTHER" id="PTHR45753:SF4">
    <property type="entry name" value="ORNITHINE CARBAMOYLTRANSFERASE SUBUNIT F-RELATED"/>
    <property type="match status" value="1"/>
</dbReference>
<dbReference type="PANTHER" id="PTHR45753">
    <property type="entry name" value="ORNITHINE CARBAMOYLTRANSFERASE, MITOCHONDRIAL"/>
    <property type="match status" value="1"/>
</dbReference>
<dbReference type="Pfam" id="PF00185">
    <property type="entry name" value="OTCace"/>
    <property type="match status" value="1"/>
</dbReference>
<dbReference type="Pfam" id="PF02729">
    <property type="entry name" value="OTCace_N"/>
    <property type="match status" value="1"/>
</dbReference>
<dbReference type="PRINTS" id="PR00100">
    <property type="entry name" value="AOTCASE"/>
</dbReference>
<dbReference type="PRINTS" id="PR00102">
    <property type="entry name" value="OTCASE"/>
</dbReference>
<dbReference type="SUPFAM" id="SSF53671">
    <property type="entry name" value="Aspartate/ornithine carbamoyltransferase"/>
    <property type="match status" value="1"/>
</dbReference>
<dbReference type="PROSITE" id="PS00097">
    <property type="entry name" value="CARBAMOYLTRANSFERASE"/>
    <property type="match status" value="1"/>
</dbReference>
<accession>B8D9F3</accession>